<accession>Q8BXR6</accession>
<accession>Q8K329</accession>
<comment type="function">
    <text evidence="1 3">E3 ubiquitin ligase catalyzing the covalent attachment of ubiquitin moieties onto substrate proteins (PubMed:23892723). Involved in the TLR and IL-1 signaling pathways via interaction with the complex containing IRAK kinases and TRAF6 (By similarity). Mediates 'Lys-63'-linked polyubiquitination of IRAK1. Can activate AP1/JUN and ELK1 (By similarity). Acts as a regulator of innate immunity by mediating 'Lys-63'-linked polyubiquitination of RIPK2 downstream of NOD1 and NOD2, thereby transforming RIPK2 into a scaffolding protein for downstream effectors, ultimately leading to activation of the NF-kappa-B and MAP kinases signaling (PubMed:23892723). Catalyzes 'Lys-63'-linked polyubiquitination of RIPK2 in parallel of XIAP (PubMed:23892723).</text>
</comment>
<comment type="catalytic activity">
    <reaction evidence="3">
        <text>S-ubiquitinyl-[E2 ubiquitin-conjugating enzyme]-L-cysteine + [acceptor protein]-L-lysine = [E2 ubiquitin-conjugating enzyme]-L-cysteine + N(6)-ubiquitinyl-[acceptor protein]-L-lysine.</text>
        <dbReference type="EC" id="2.3.2.27"/>
    </reaction>
</comment>
<comment type="pathway">
    <text evidence="3">Protein modification; protein ubiquitination.</text>
</comment>
<comment type="subunit">
    <text evidence="1">Interacts with TRAF6, MAP3K14 and MAP3K7.</text>
</comment>
<comment type="PTM">
    <text evidence="1">Phosphorylated by IRAK1 enhancing its E3 ligase activity.</text>
</comment>
<comment type="disruption phenotype">
    <text evidence="3">Mice show impaired clearance of C.rodentium due to decreased NOD2 signaling (PubMed:23892723). Mice display decreased muramyl dipeptide (MDP)-induced expression of cytokines (PubMed:23892723).</text>
</comment>
<comment type="similarity">
    <text evidence="5">Belongs to the pellino family.</text>
</comment>
<feature type="chain" id="PRO_0000194177" description="E3 ubiquitin-protein ligase pellino homolog 3">
    <location>
        <begin position="1"/>
        <end position="445"/>
    </location>
</feature>
<feature type="region of interest" description="Disordered" evidence="2">
    <location>
        <begin position="1"/>
        <end position="24"/>
    </location>
</feature>
<feature type="compositionally biased region" description="Polar residues" evidence="2">
    <location>
        <begin position="12"/>
        <end position="24"/>
    </location>
</feature>
<feature type="modified residue" description="Phosphoserine" evidence="1">
    <location>
        <position position="11"/>
    </location>
</feature>
<feature type="mutagenesis site" description="Abolished ability to regulate the NOD2 signaling; when associated with A-161." evidence="3">
    <original>R</original>
    <variation>A</variation>
    <location>
        <position position="131"/>
    </location>
</feature>
<feature type="mutagenesis site" description="Abolished ability to regulate the NOD2 signaling; when associated with A-131." evidence="3">
    <original>S</original>
    <variation>A</variation>
    <location>
        <position position="161"/>
    </location>
</feature>
<feature type="mutagenesis site" description="Abolished E3 ubiquitin ligase activity and ability to regulate the NOD2 signaling." evidence="3">
    <original>CPLC</original>
    <variation>APLA</variation>
    <location>
        <begin position="360"/>
        <end position="363"/>
    </location>
</feature>
<feature type="sequence conflict" description="In Ref. 1; BAC31913." evidence="5" ref="1">
    <original>R</original>
    <variation>Q</variation>
    <location>
        <position position="353"/>
    </location>
</feature>
<dbReference type="EC" id="2.3.2.27" evidence="3"/>
<dbReference type="EMBL" id="AK044418">
    <property type="protein sequence ID" value="BAC31913.1"/>
    <property type="molecule type" value="mRNA"/>
</dbReference>
<dbReference type="EMBL" id="BC028931">
    <property type="protein sequence ID" value="AAH28931.1"/>
    <property type="molecule type" value="mRNA"/>
</dbReference>
<dbReference type="CCDS" id="CCDS37888.1"/>
<dbReference type="RefSeq" id="NP_766423.3">
    <property type="nucleotide sequence ID" value="NM_172835.3"/>
</dbReference>
<dbReference type="RefSeq" id="XP_006531808.1">
    <property type="nucleotide sequence ID" value="XM_006531745.1"/>
</dbReference>
<dbReference type="SMR" id="Q8BXR6"/>
<dbReference type="BioGRID" id="232208">
    <property type="interactions" value="3"/>
</dbReference>
<dbReference type="FunCoup" id="Q8BXR6">
    <property type="interactions" value="28"/>
</dbReference>
<dbReference type="STRING" id="10090.ENSMUSP00000025834"/>
<dbReference type="PhosphoSitePlus" id="Q8BXR6"/>
<dbReference type="PaxDb" id="10090-ENSMUSP00000025834"/>
<dbReference type="ProteomicsDB" id="287825"/>
<dbReference type="DNASU" id="240518"/>
<dbReference type="GeneID" id="240518"/>
<dbReference type="KEGG" id="mmu:240518"/>
<dbReference type="UCSC" id="uc012bgq.1">
    <property type="organism name" value="mouse"/>
</dbReference>
<dbReference type="AGR" id="MGI:1924963"/>
<dbReference type="CTD" id="246330"/>
<dbReference type="MGI" id="MGI:1924963">
    <property type="gene designation" value="Peli3"/>
</dbReference>
<dbReference type="eggNOG" id="KOG3842">
    <property type="taxonomic scope" value="Eukaryota"/>
</dbReference>
<dbReference type="InParanoid" id="Q8BXR6"/>
<dbReference type="OrthoDB" id="8801906at2759"/>
<dbReference type="PhylomeDB" id="Q8BXR6"/>
<dbReference type="TreeFam" id="TF314338"/>
<dbReference type="Reactome" id="R-MMU-9020702">
    <property type="pathway name" value="Interleukin-1 signaling"/>
</dbReference>
<dbReference type="Reactome" id="R-MMU-937039">
    <property type="pathway name" value="IRAK1 recruits IKK complex"/>
</dbReference>
<dbReference type="Reactome" id="R-MMU-975144">
    <property type="pathway name" value="IRAK1 recruits IKK complex upon TLR7/8 or 9 stimulation"/>
</dbReference>
<dbReference type="UniPathway" id="UPA00143"/>
<dbReference type="BioGRID-ORCS" id="240518">
    <property type="hits" value="3 hits in 78 CRISPR screens"/>
</dbReference>
<dbReference type="ChiTaRS" id="Peli3">
    <property type="organism name" value="mouse"/>
</dbReference>
<dbReference type="PRO" id="PR:Q8BXR6"/>
<dbReference type="Proteomes" id="UP000000589">
    <property type="component" value="Unplaced"/>
</dbReference>
<dbReference type="RNAct" id="Q8BXR6">
    <property type="molecule type" value="protein"/>
</dbReference>
<dbReference type="GO" id="GO:0061630">
    <property type="term" value="F:ubiquitin protein ligase activity"/>
    <property type="evidence" value="ECO:0000314"/>
    <property type="project" value="UniProtKB"/>
</dbReference>
<dbReference type="GO" id="GO:0004842">
    <property type="term" value="F:ubiquitin-protein transferase activity"/>
    <property type="evidence" value="ECO:0000314"/>
    <property type="project" value="MGI"/>
</dbReference>
<dbReference type="GO" id="GO:0050829">
    <property type="term" value="P:defense response to Gram-negative bacterium"/>
    <property type="evidence" value="ECO:0000315"/>
    <property type="project" value="MGI"/>
</dbReference>
<dbReference type="GO" id="GO:0045087">
    <property type="term" value="P:innate immune response"/>
    <property type="evidence" value="ECO:0007669"/>
    <property type="project" value="UniProtKB-KW"/>
</dbReference>
<dbReference type="GO" id="GO:2001237">
    <property type="term" value="P:negative regulation of extrinsic apoptotic signaling pathway"/>
    <property type="evidence" value="ECO:0000315"/>
    <property type="project" value="MGI"/>
</dbReference>
<dbReference type="GO" id="GO:0031397">
    <property type="term" value="P:negative regulation of protein ubiquitination"/>
    <property type="evidence" value="ECO:0000316"/>
    <property type="project" value="MGI"/>
</dbReference>
<dbReference type="GO" id="GO:0045751">
    <property type="term" value="P:negative regulation of Toll signaling pathway"/>
    <property type="evidence" value="ECO:0000316"/>
    <property type="project" value="MGI"/>
</dbReference>
<dbReference type="GO" id="GO:0010804">
    <property type="term" value="P:negative regulation of tumor necrosis factor-mediated signaling pathway"/>
    <property type="evidence" value="ECO:0000315"/>
    <property type="project" value="MGI"/>
</dbReference>
<dbReference type="GO" id="GO:0032480">
    <property type="term" value="P:negative regulation of type I interferon production"/>
    <property type="evidence" value="ECO:0000315"/>
    <property type="project" value="MGI"/>
</dbReference>
<dbReference type="GO" id="GO:0070434">
    <property type="term" value="P:positive regulation of nucleotide-binding oligomerization domain containing 2 signaling pathway"/>
    <property type="evidence" value="ECO:0000315"/>
    <property type="project" value="MGI"/>
</dbReference>
<dbReference type="GO" id="GO:0070534">
    <property type="term" value="P:protein K63-linked ubiquitination"/>
    <property type="evidence" value="ECO:0000314"/>
    <property type="project" value="MGI"/>
</dbReference>
<dbReference type="GO" id="GO:0070428">
    <property type="term" value="P:regulation of nucleotide-binding oligomerization domain containing 1 signaling pathway"/>
    <property type="evidence" value="ECO:0000315"/>
    <property type="project" value="MGI"/>
</dbReference>
<dbReference type="InterPro" id="IPR006800">
    <property type="entry name" value="Pellino_fam"/>
</dbReference>
<dbReference type="InterPro" id="IPR048334">
    <property type="entry name" value="Pellino_FHA"/>
</dbReference>
<dbReference type="InterPro" id="IPR048335">
    <property type="entry name" value="Pellino_RING"/>
</dbReference>
<dbReference type="PANTHER" id="PTHR12098:SF9">
    <property type="entry name" value="E3 UBIQUITIN-PROTEIN LIGASE PELLINO HOMOLOG 3"/>
    <property type="match status" value="1"/>
</dbReference>
<dbReference type="PANTHER" id="PTHR12098">
    <property type="entry name" value="E3 UBIQUITIN-PROTEIN LIGASE PELLINO-RELATED"/>
    <property type="match status" value="1"/>
</dbReference>
<dbReference type="Pfam" id="PF04710">
    <property type="entry name" value="Pellino_FHA"/>
    <property type="match status" value="1"/>
</dbReference>
<dbReference type="Pfam" id="PF20723">
    <property type="entry name" value="Pellino_RING"/>
    <property type="match status" value="1"/>
</dbReference>
<dbReference type="PIRSF" id="PIRSF038886">
    <property type="entry name" value="Pellino"/>
    <property type="match status" value="1"/>
</dbReference>
<reference key="1">
    <citation type="journal article" date="2005" name="Science">
        <title>The transcriptional landscape of the mammalian genome.</title>
        <authorList>
            <person name="Carninci P."/>
            <person name="Kasukawa T."/>
            <person name="Katayama S."/>
            <person name="Gough J."/>
            <person name="Frith M.C."/>
            <person name="Maeda N."/>
            <person name="Oyama R."/>
            <person name="Ravasi T."/>
            <person name="Lenhard B."/>
            <person name="Wells C."/>
            <person name="Kodzius R."/>
            <person name="Shimokawa K."/>
            <person name="Bajic V.B."/>
            <person name="Brenner S.E."/>
            <person name="Batalov S."/>
            <person name="Forrest A.R."/>
            <person name="Zavolan M."/>
            <person name="Davis M.J."/>
            <person name="Wilming L.G."/>
            <person name="Aidinis V."/>
            <person name="Allen J.E."/>
            <person name="Ambesi-Impiombato A."/>
            <person name="Apweiler R."/>
            <person name="Aturaliya R.N."/>
            <person name="Bailey T.L."/>
            <person name="Bansal M."/>
            <person name="Baxter L."/>
            <person name="Beisel K.W."/>
            <person name="Bersano T."/>
            <person name="Bono H."/>
            <person name="Chalk A.M."/>
            <person name="Chiu K.P."/>
            <person name="Choudhary V."/>
            <person name="Christoffels A."/>
            <person name="Clutterbuck D.R."/>
            <person name="Crowe M.L."/>
            <person name="Dalla E."/>
            <person name="Dalrymple B.P."/>
            <person name="de Bono B."/>
            <person name="Della Gatta G."/>
            <person name="di Bernardo D."/>
            <person name="Down T."/>
            <person name="Engstrom P."/>
            <person name="Fagiolini M."/>
            <person name="Faulkner G."/>
            <person name="Fletcher C.F."/>
            <person name="Fukushima T."/>
            <person name="Furuno M."/>
            <person name="Futaki S."/>
            <person name="Gariboldi M."/>
            <person name="Georgii-Hemming P."/>
            <person name="Gingeras T.R."/>
            <person name="Gojobori T."/>
            <person name="Green R.E."/>
            <person name="Gustincich S."/>
            <person name="Harbers M."/>
            <person name="Hayashi Y."/>
            <person name="Hensch T.K."/>
            <person name="Hirokawa N."/>
            <person name="Hill D."/>
            <person name="Huminiecki L."/>
            <person name="Iacono M."/>
            <person name="Ikeo K."/>
            <person name="Iwama A."/>
            <person name="Ishikawa T."/>
            <person name="Jakt M."/>
            <person name="Kanapin A."/>
            <person name="Katoh M."/>
            <person name="Kawasawa Y."/>
            <person name="Kelso J."/>
            <person name="Kitamura H."/>
            <person name="Kitano H."/>
            <person name="Kollias G."/>
            <person name="Krishnan S.P."/>
            <person name="Kruger A."/>
            <person name="Kummerfeld S.K."/>
            <person name="Kurochkin I.V."/>
            <person name="Lareau L.F."/>
            <person name="Lazarevic D."/>
            <person name="Lipovich L."/>
            <person name="Liu J."/>
            <person name="Liuni S."/>
            <person name="McWilliam S."/>
            <person name="Madan Babu M."/>
            <person name="Madera M."/>
            <person name="Marchionni L."/>
            <person name="Matsuda H."/>
            <person name="Matsuzawa S."/>
            <person name="Miki H."/>
            <person name="Mignone F."/>
            <person name="Miyake S."/>
            <person name="Morris K."/>
            <person name="Mottagui-Tabar S."/>
            <person name="Mulder N."/>
            <person name="Nakano N."/>
            <person name="Nakauchi H."/>
            <person name="Ng P."/>
            <person name="Nilsson R."/>
            <person name="Nishiguchi S."/>
            <person name="Nishikawa S."/>
            <person name="Nori F."/>
            <person name="Ohara O."/>
            <person name="Okazaki Y."/>
            <person name="Orlando V."/>
            <person name="Pang K.C."/>
            <person name="Pavan W.J."/>
            <person name="Pavesi G."/>
            <person name="Pesole G."/>
            <person name="Petrovsky N."/>
            <person name="Piazza S."/>
            <person name="Reed J."/>
            <person name="Reid J.F."/>
            <person name="Ring B.Z."/>
            <person name="Ringwald M."/>
            <person name="Rost B."/>
            <person name="Ruan Y."/>
            <person name="Salzberg S.L."/>
            <person name="Sandelin A."/>
            <person name="Schneider C."/>
            <person name="Schoenbach C."/>
            <person name="Sekiguchi K."/>
            <person name="Semple C.A."/>
            <person name="Seno S."/>
            <person name="Sessa L."/>
            <person name="Sheng Y."/>
            <person name="Shibata Y."/>
            <person name="Shimada H."/>
            <person name="Shimada K."/>
            <person name="Silva D."/>
            <person name="Sinclair B."/>
            <person name="Sperling S."/>
            <person name="Stupka E."/>
            <person name="Sugiura K."/>
            <person name="Sultana R."/>
            <person name="Takenaka Y."/>
            <person name="Taki K."/>
            <person name="Tammoja K."/>
            <person name="Tan S.L."/>
            <person name="Tang S."/>
            <person name="Taylor M.S."/>
            <person name="Tegner J."/>
            <person name="Teichmann S.A."/>
            <person name="Ueda H.R."/>
            <person name="van Nimwegen E."/>
            <person name="Verardo R."/>
            <person name="Wei C.L."/>
            <person name="Yagi K."/>
            <person name="Yamanishi H."/>
            <person name="Zabarovsky E."/>
            <person name="Zhu S."/>
            <person name="Zimmer A."/>
            <person name="Hide W."/>
            <person name="Bult C."/>
            <person name="Grimmond S.M."/>
            <person name="Teasdale R.D."/>
            <person name="Liu E.T."/>
            <person name="Brusic V."/>
            <person name="Quackenbush J."/>
            <person name="Wahlestedt C."/>
            <person name="Mattick J.S."/>
            <person name="Hume D.A."/>
            <person name="Kai C."/>
            <person name="Sasaki D."/>
            <person name="Tomaru Y."/>
            <person name="Fukuda S."/>
            <person name="Kanamori-Katayama M."/>
            <person name="Suzuki M."/>
            <person name="Aoki J."/>
            <person name="Arakawa T."/>
            <person name="Iida J."/>
            <person name="Imamura K."/>
            <person name="Itoh M."/>
            <person name="Kato T."/>
            <person name="Kawaji H."/>
            <person name="Kawagashira N."/>
            <person name="Kawashima T."/>
            <person name="Kojima M."/>
            <person name="Kondo S."/>
            <person name="Konno H."/>
            <person name="Nakano K."/>
            <person name="Ninomiya N."/>
            <person name="Nishio T."/>
            <person name="Okada M."/>
            <person name="Plessy C."/>
            <person name="Shibata K."/>
            <person name="Shiraki T."/>
            <person name="Suzuki S."/>
            <person name="Tagami M."/>
            <person name="Waki K."/>
            <person name="Watahiki A."/>
            <person name="Okamura-Oho Y."/>
            <person name="Suzuki H."/>
            <person name="Kawai J."/>
            <person name="Hayashizaki Y."/>
        </authorList>
    </citation>
    <scope>NUCLEOTIDE SEQUENCE [LARGE SCALE MRNA]</scope>
    <source>
        <strain>C57BL/6J</strain>
        <tissue>Retina</tissue>
    </source>
</reference>
<reference key="2">
    <citation type="journal article" date="2004" name="Genome Res.">
        <title>The status, quality, and expansion of the NIH full-length cDNA project: the Mammalian Gene Collection (MGC).</title>
        <authorList>
            <consortium name="The MGC Project Team"/>
        </authorList>
    </citation>
    <scope>NUCLEOTIDE SEQUENCE [LARGE SCALE MRNA]</scope>
    <source>
        <tissue>Mammary tumor</tissue>
    </source>
</reference>
<reference key="3">
    <citation type="journal article" date="2013" name="Nat. Immunol.">
        <title>Pellino3 ubiquitinates RIP2 and mediates Nod2-induced signaling and protective effects in colitis.</title>
        <authorList>
            <person name="Yang S."/>
            <person name="Wang B."/>
            <person name="Humphries F."/>
            <person name="Jackson R."/>
            <person name="Healy M.E."/>
            <person name="Bergin R."/>
            <person name="Aviello G."/>
            <person name="Hall B."/>
            <person name="McNamara D."/>
            <person name="Darby T."/>
            <person name="Quinlan A."/>
            <person name="Shanahan F."/>
            <person name="Melgar S."/>
            <person name="Fallon P.G."/>
            <person name="Moynagh P.N."/>
        </authorList>
    </citation>
    <scope>FUNCTION</scope>
    <scope>CATALYTIC ACTIVITY</scope>
    <scope>PATHWAY</scope>
    <scope>DISRUPTION PHENOTYPE</scope>
    <scope>MUTAGENESIS OF ARG-131; SER-161 AND 360-CYS--CYS-363</scope>
</reference>
<sequence>MVLEGNPDVGSPRTSDLQHPGSQGSCILSCPGEEALAGEEPIKYGELIVLGYNGCLASGDKGRRRSRLALSRRPHANGVKPDVMHHISTPLVSKALSNRGQHSISFTLSRSHSVIVEYTHDSDKDMFQIGRSTENMIDFVVTDTSPGGGATEGPSAQSTISRYACRILCDRRPPYTARIYAAGFDASSNIFLGERAAKWRTPDGLMDGLTTNGVLVMHPAGGFSEDSAPGVWREISVCGNVYTLRDSRSAQQRGKLVENESNVLQDGSLIDLCGATLLWRTPAGLLRAPTLKQLEAQRQEANAARPQCPVGLSTLAFPSPARGRTAPDKQQPWVYVRCGHVHGYHGWGCRRERGPQERECPLCRLVGPYVPLWLGQEAGLCLDPGPPSHAFAPCGHVCSEKTARYWAQTPLPHGTHAFHAACPFCGAWLTGELGCVRLIFQGPLD</sequence>
<organism>
    <name type="scientific">Mus musculus</name>
    <name type="common">Mouse</name>
    <dbReference type="NCBI Taxonomy" id="10090"/>
    <lineage>
        <taxon>Eukaryota</taxon>
        <taxon>Metazoa</taxon>
        <taxon>Chordata</taxon>
        <taxon>Craniata</taxon>
        <taxon>Vertebrata</taxon>
        <taxon>Euteleostomi</taxon>
        <taxon>Mammalia</taxon>
        <taxon>Eutheria</taxon>
        <taxon>Euarchontoglires</taxon>
        <taxon>Glires</taxon>
        <taxon>Rodentia</taxon>
        <taxon>Myomorpha</taxon>
        <taxon>Muroidea</taxon>
        <taxon>Muridae</taxon>
        <taxon>Murinae</taxon>
        <taxon>Mus</taxon>
        <taxon>Mus</taxon>
    </lineage>
</organism>
<keyword id="KW-0391">Immunity</keyword>
<keyword id="KW-0399">Innate immunity</keyword>
<keyword id="KW-0597">Phosphoprotein</keyword>
<keyword id="KW-1185">Reference proteome</keyword>
<keyword id="KW-0808">Transferase</keyword>
<keyword id="KW-0833">Ubl conjugation pathway</keyword>
<protein>
    <recommendedName>
        <fullName evidence="5">E3 ubiquitin-protein ligase pellino homolog 3</fullName>
        <shortName evidence="4">Pellino-3</shortName>
        <ecNumber evidence="3">2.3.2.27</ecNumber>
    </recommendedName>
</protein>
<gene>
    <name evidence="6" type="primary">Peli3</name>
</gene>
<evidence type="ECO:0000250" key="1">
    <source>
        <dbReference type="UniProtKB" id="Q8N2H9"/>
    </source>
</evidence>
<evidence type="ECO:0000256" key="2">
    <source>
        <dbReference type="SAM" id="MobiDB-lite"/>
    </source>
</evidence>
<evidence type="ECO:0000269" key="3">
    <source>
    </source>
</evidence>
<evidence type="ECO:0000303" key="4">
    <source>
    </source>
</evidence>
<evidence type="ECO:0000305" key="5"/>
<evidence type="ECO:0000312" key="6">
    <source>
        <dbReference type="MGI" id="MGI:1924963"/>
    </source>
</evidence>
<name>PELI3_MOUSE</name>
<proteinExistence type="evidence at protein level"/>